<accession>Q7YJT0</accession>
<protein>
    <recommendedName>
        <fullName evidence="1">NAD(P)H-quinone oxidoreductase subunit I, chloroplastic</fullName>
        <ecNumber evidence="1">7.1.1.-</ecNumber>
    </recommendedName>
    <alternativeName>
        <fullName evidence="1">NAD(P)H dehydrogenase subunit I</fullName>
        <shortName evidence="1">NDH subunit I</shortName>
    </alternativeName>
    <alternativeName>
        <fullName evidence="1">NADH-plastoquinone oxidoreductase subunit I</fullName>
    </alternativeName>
</protein>
<comment type="function">
    <text evidence="1">NDH shuttles electrons from NAD(P)H:plastoquinone, via FMN and iron-sulfur (Fe-S) centers, to quinones in the photosynthetic chain and possibly in a chloroplast respiratory chain. The immediate electron acceptor for the enzyme in this species is believed to be plastoquinone. Couples the redox reaction to proton translocation, and thus conserves the redox energy in a proton gradient.</text>
</comment>
<comment type="catalytic activity">
    <reaction evidence="1">
        <text>a plastoquinone + NADH + (n+1) H(+)(in) = a plastoquinol + NAD(+) + n H(+)(out)</text>
        <dbReference type="Rhea" id="RHEA:42608"/>
        <dbReference type="Rhea" id="RHEA-COMP:9561"/>
        <dbReference type="Rhea" id="RHEA-COMP:9562"/>
        <dbReference type="ChEBI" id="CHEBI:15378"/>
        <dbReference type="ChEBI" id="CHEBI:17757"/>
        <dbReference type="ChEBI" id="CHEBI:57540"/>
        <dbReference type="ChEBI" id="CHEBI:57945"/>
        <dbReference type="ChEBI" id="CHEBI:62192"/>
    </reaction>
</comment>
<comment type="catalytic activity">
    <reaction evidence="1">
        <text>a plastoquinone + NADPH + (n+1) H(+)(in) = a plastoquinol + NADP(+) + n H(+)(out)</text>
        <dbReference type="Rhea" id="RHEA:42612"/>
        <dbReference type="Rhea" id="RHEA-COMP:9561"/>
        <dbReference type="Rhea" id="RHEA-COMP:9562"/>
        <dbReference type="ChEBI" id="CHEBI:15378"/>
        <dbReference type="ChEBI" id="CHEBI:17757"/>
        <dbReference type="ChEBI" id="CHEBI:57783"/>
        <dbReference type="ChEBI" id="CHEBI:58349"/>
        <dbReference type="ChEBI" id="CHEBI:62192"/>
    </reaction>
</comment>
<comment type="cofactor">
    <cofactor evidence="1">
        <name>[4Fe-4S] cluster</name>
        <dbReference type="ChEBI" id="CHEBI:49883"/>
    </cofactor>
    <text evidence="1">Binds 2 [4Fe-4S] clusters per subunit.</text>
</comment>
<comment type="subunit">
    <text evidence="1">NDH is composed of at least 16 different subunits, 5 of which are encoded in the nucleus.</text>
</comment>
<comment type="subcellular location">
    <subcellularLocation>
        <location evidence="1">Plastid</location>
        <location evidence="1">Chloroplast thylakoid membrane</location>
        <topology evidence="1">Peripheral membrane protein</topology>
    </subcellularLocation>
</comment>
<comment type="similarity">
    <text evidence="1">Belongs to the complex I 23 kDa subunit family.</text>
</comment>
<dbReference type="EC" id="7.1.1.-" evidence="1"/>
<dbReference type="EMBL" id="AJ428413">
    <property type="protein sequence ID" value="CAD28776.1"/>
    <property type="molecule type" value="Genomic_DNA"/>
</dbReference>
<dbReference type="RefSeq" id="NP_862809.1">
    <property type="nucleotide sequence ID" value="NC_004993.1"/>
</dbReference>
<dbReference type="SMR" id="Q7YJT0"/>
<dbReference type="GeneID" id="2597993"/>
<dbReference type="GO" id="GO:0009535">
    <property type="term" value="C:chloroplast thylakoid membrane"/>
    <property type="evidence" value="ECO:0007669"/>
    <property type="project" value="UniProtKB-SubCell"/>
</dbReference>
<dbReference type="GO" id="GO:0051539">
    <property type="term" value="F:4 iron, 4 sulfur cluster binding"/>
    <property type="evidence" value="ECO:0007669"/>
    <property type="project" value="UniProtKB-KW"/>
</dbReference>
<dbReference type="GO" id="GO:0005506">
    <property type="term" value="F:iron ion binding"/>
    <property type="evidence" value="ECO:0007669"/>
    <property type="project" value="UniProtKB-UniRule"/>
</dbReference>
<dbReference type="GO" id="GO:0008137">
    <property type="term" value="F:NADH dehydrogenase (ubiquinone) activity"/>
    <property type="evidence" value="ECO:0007669"/>
    <property type="project" value="InterPro"/>
</dbReference>
<dbReference type="GO" id="GO:0048038">
    <property type="term" value="F:quinone binding"/>
    <property type="evidence" value="ECO:0007669"/>
    <property type="project" value="UniProtKB-KW"/>
</dbReference>
<dbReference type="GO" id="GO:0019684">
    <property type="term" value="P:photosynthesis, light reaction"/>
    <property type="evidence" value="ECO:0007669"/>
    <property type="project" value="UniProtKB-UniRule"/>
</dbReference>
<dbReference type="FunFam" id="3.30.70.3270:FF:000006">
    <property type="entry name" value="NAD(P)H-quinone oxidoreductase subunit I, chloroplastic"/>
    <property type="match status" value="1"/>
</dbReference>
<dbReference type="Gene3D" id="3.30.70.3270">
    <property type="match status" value="1"/>
</dbReference>
<dbReference type="HAMAP" id="MF_01351">
    <property type="entry name" value="NDH1_NuoI"/>
    <property type="match status" value="1"/>
</dbReference>
<dbReference type="InterPro" id="IPR017896">
    <property type="entry name" value="4Fe4S_Fe-S-bd"/>
</dbReference>
<dbReference type="InterPro" id="IPR017900">
    <property type="entry name" value="4Fe4S_Fe_S_CS"/>
</dbReference>
<dbReference type="InterPro" id="IPR010226">
    <property type="entry name" value="NADH_quinone_OxRdtase_chainI"/>
</dbReference>
<dbReference type="InterPro" id="IPR004497">
    <property type="entry name" value="NDHI"/>
</dbReference>
<dbReference type="NCBIfam" id="TIGR00403">
    <property type="entry name" value="ndhI"/>
    <property type="match status" value="1"/>
</dbReference>
<dbReference type="NCBIfam" id="TIGR01971">
    <property type="entry name" value="NuoI"/>
    <property type="match status" value="1"/>
</dbReference>
<dbReference type="NCBIfam" id="NF004537">
    <property type="entry name" value="PRK05888.1-3"/>
    <property type="match status" value="1"/>
</dbReference>
<dbReference type="PANTHER" id="PTHR47275">
    <property type="entry name" value="NAD(P)H-QUINONE OXIDOREDUCTASE SUBUNIT I, CHLOROPLASTIC"/>
    <property type="match status" value="1"/>
</dbReference>
<dbReference type="PANTHER" id="PTHR47275:SF1">
    <property type="entry name" value="NAD(P)H-QUINONE OXIDOREDUCTASE SUBUNIT I, CHLOROPLASTIC"/>
    <property type="match status" value="1"/>
</dbReference>
<dbReference type="Pfam" id="PF00037">
    <property type="entry name" value="Fer4"/>
    <property type="match status" value="2"/>
</dbReference>
<dbReference type="SUPFAM" id="SSF54862">
    <property type="entry name" value="4Fe-4S ferredoxins"/>
    <property type="match status" value="1"/>
</dbReference>
<dbReference type="PROSITE" id="PS00198">
    <property type="entry name" value="4FE4S_FER_1"/>
    <property type="match status" value="2"/>
</dbReference>
<dbReference type="PROSITE" id="PS51379">
    <property type="entry name" value="4FE4S_FER_2"/>
    <property type="match status" value="2"/>
</dbReference>
<reference key="1">
    <citation type="journal article" date="2003" name="Plant Syst. Evol.">
        <title>The chloroplast genome of the 'basal' angiosperm Calycanthus fertilis -- structural and phylogenetic analyses.</title>
        <authorList>
            <person name="Goremykin V."/>
            <person name="Hirsch-Ernst K.I."/>
            <person name="Woelfl S."/>
            <person name="Hellwig F.H."/>
        </authorList>
    </citation>
    <scope>NUCLEOTIDE SEQUENCE [LARGE SCALE GENOMIC DNA]</scope>
</reference>
<name>NDHI_CALFG</name>
<proteinExistence type="inferred from homology"/>
<geneLocation type="chloroplast"/>
<gene>
    <name evidence="1" type="primary">ndhI</name>
</gene>
<sequence>MFPMVTGFMNYGQQTVRAARYIGQSFMITLSHANRLPVTIQYPYEKSITSERFRGRIHFEFDKCIACEVCVRVCPIDLPVVHWRLETDIRKKRLLNYSIDFGICIFCGNCVEYCPTNCLSMTEEYELSAYNRHELNYNQIALGRLPMSVIEDYTIRTTRNSTQIKIAMDKPLNARTVTNF</sequence>
<feature type="chain" id="PRO_0000245654" description="NAD(P)H-quinone oxidoreductase subunit I, chloroplastic">
    <location>
        <begin position="1"/>
        <end position="180"/>
    </location>
</feature>
<feature type="domain" description="4Fe-4S ferredoxin-type 1" evidence="1">
    <location>
        <begin position="55"/>
        <end position="84"/>
    </location>
</feature>
<feature type="domain" description="4Fe-4S ferredoxin-type 2" evidence="1">
    <location>
        <begin position="95"/>
        <end position="124"/>
    </location>
</feature>
<feature type="binding site" evidence="1">
    <location>
        <position position="64"/>
    </location>
    <ligand>
        <name>[4Fe-4S] cluster</name>
        <dbReference type="ChEBI" id="CHEBI:49883"/>
        <label>1</label>
    </ligand>
</feature>
<feature type="binding site" evidence="1">
    <location>
        <position position="67"/>
    </location>
    <ligand>
        <name>[4Fe-4S] cluster</name>
        <dbReference type="ChEBI" id="CHEBI:49883"/>
        <label>1</label>
    </ligand>
</feature>
<feature type="binding site" evidence="1">
    <location>
        <position position="70"/>
    </location>
    <ligand>
        <name>[4Fe-4S] cluster</name>
        <dbReference type="ChEBI" id="CHEBI:49883"/>
        <label>1</label>
    </ligand>
</feature>
<feature type="binding site" evidence="1">
    <location>
        <position position="74"/>
    </location>
    <ligand>
        <name>[4Fe-4S] cluster</name>
        <dbReference type="ChEBI" id="CHEBI:49883"/>
        <label>2</label>
    </ligand>
</feature>
<feature type="binding site" evidence="1">
    <location>
        <position position="104"/>
    </location>
    <ligand>
        <name>[4Fe-4S] cluster</name>
        <dbReference type="ChEBI" id="CHEBI:49883"/>
        <label>2</label>
    </ligand>
</feature>
<feature type="binding site" evidence="1">
    <location>
        <position position="107"/>
    </location>
    <ligand>
        <name>[4Fe-4S] cluster</name>
        <dbReference type="ChEBI" id="CHEBI:49883"/>
        <label>2</label>
    </ligand>
</feature>
<feature type="binding site" evidence="1">
    <location>
        <position position="110"/>
    </location>
    <ligand>
        <name>[4Fe-4S] cluster</name>
        <dbReference type="ChEBI" id="CHEBI:49883"/>
        <label>2</label>
    </ligand>
</feature>
<feature type="binding site" evidence="1">
    <location>
        <position position="114"/>
    </location>
    <ligand>
        <name>[4Fe-4S] cluster</name>
        <dbReference type="ChEBI" id="CHEBI:49883"/>
        <label>1</label>
    </ligand>
</feature>
<organism>
    <name type="scientific">Calycanthus floridus var. glaucus</name>
    <name type="common">Eastern sweetshrub</name>
    <name type="synonym">Calycanthus fertilis var. ferax</name>
    <dbReference type="NCBI Taxonomy" id="212734"/>
    <lineage>
        <taxon>Eukaryota</taxon>
        <taxon>Viridiplantae</taxon>
        <taxon>Streptophyta</taxon>
        <taxon>Embryophyta</taxon>
        <taxon>Tracheophyta</taxon>
        <taxon>Spermatophyta</taxon>
        <taxon>Magnoliopsida</taxon>
        <taxon>Magnoliidae</taxon>
        <taxon>Laurales</taxon>
        <taxon>Calycanthaceae</taxon>
        <taxon>Calycanthus</taxon>
    </lineage>
</organism>
<evidence type="ECO:0000255" key="1">
    <source>
        <dbReference type="HAMAP-Rule" id="MF_01351"/>
    </source>
</evidence>
<keyword id="KW-0004">4Fe-4S</keyword>
<keyword id="KW-0150">Chloroplast</keyword>
<keyword id="KW-0408">Iron</keyword>
<keyword id="KW-0411">Iron-sulfur</keyword>
<keyword id="KW-0472">Membrane</keyword>
<keyword id="KW-0479">Metal-binding</keyword>
<keyword id="KW-0520">NAD</keyword>
<keyword id="KW-0521">NADP</keyword>
<keyword id="KW-0934">Plastid</keyword>
<keyword id="KW-0618">Plastoquinone</keyword>
<keyword id="KW-0874">Quinone</keyword>
<keyword id="KW-0677">Repeat</keyword>
<keyword id="KW-0793">Thylakoid</keyword>
<keyword id="KW-1278">Translocase</keyword>